<name>HIS1_ALKMQ</name>
<gene>
    <name evidence="1" type="primary">hisG</name>
    <name type="ordered locus">Amet_0571</name>
</gene>
<sequence>MNVIKIALAKGRLADQSVKLLESIGIDCGPLLDKGRKLIVALPKDHLEVVFVKAPDVPTYVEHGAVDMGIVGKDVLLEANKQLYEVLDLQFGKCKFSVAGSTSMENYPTPHMRVATKYPNIAKNFFQSKGQSVEIIKQEGSVELAPMVGLADVIVDIVETGNTLRENGLMVFEDIVEISARLVLNQVSYKTKHQEIRGLIDRIAEKTGK</sequence>
<comment type="function">
    <text evidence="1">Catalyzes the condensation of ATP and 5-phosphoribose 1-diphosphate to form N'-(5'-phosphoribosyl)-ATP (PR-ATP). Has a crucial role in the pathway because the rate of histidine biosynthesis seems to be controlled primarily by regulation of HisG enzymatic activity.</text>
</comment>
<comment type="catalytic activity">
    <reaction evidence="1">
        <text>1-(5-phospho-beta-D-ribosyl)-ATP + diphosphate = 5-phospho-alpha-D-ribose 1-diphosphate + ATP</text>
        <dbReference type="Rhea" id="RHEA:18473"/>
        <dbReference type="ChEBI" id="CHEBI:30616"/>
        <dbReference type="ChEBI" id="CHEBI:33019"/>
        <dbReference type="ChEBI" id="CHEBI:58017"/>
        <dbReference type="ChEBI" id="CHEBI:73183"/>
        <dbReference type="EC" id="2.4.2.17"/>
    </reaction>
</comment>
<comment type="pathway">
    <text evidence="1">Amino-acid biosynthesis; L-histidine biosynthesis; L-histidine from 5-phospho-alpha-D-ribose 1-diphosphate: step 1/9.</text>
</comment>
<comment type="subunit">
    <text evidence="1">Heteromultimer composed of HisG and HisZ subunits.</text>
</comment>
<comment type="subcellular location">
    <subcellularLocation>
        <location evidence="1">Cytoplasm</location>
    </subcellularLocation>
</comment>
<comment type="domain">
    <text>Lacks the C-terminal regulatory region which is replaced by HisZ.</text>
</comment>
<comment type="similarity">
    <text evidence="1">Belongs to the ATP phosphoribosyltransferase family. Short subfamily.</text>
</comment>
<reference key="1">
    <citation type="journal article" date="2016" name="Genome Announc.">
        <title>Complete genome sequence of Alkaliphilus metalliredigens strain QYMF, an alkaliphilic and metal-reducing bacterium isolated from borax-contaminated leachate ponds.</title>
        <authorList>
            <person name="Hwang C."/>
            <person name="Copeland A."/>
            <person name="Lucas S."/>
            <person name="Lapidus A."/>
            <person name="Barry K."/>
            <person name="Detter J.C."/>
            <person name="Glavina Del Rio T."/>
            <person name="Hammon N."/>
            <person name="Israni S."/>
            <person name="Dalin E."/>
            <person name="Tice H."/>
            <person name="Pitluck S."/>
            <person name="Chertkov O."/>
            <person name="Brettin T."/>
            <person name="Bruce D."/>
            <person name="Han C."/>
            <person name="Schmutz J."/>
            <person name="Larimer F."/>
            <person name="Land M.L."/>
            <person name="Hauser L."/>
            <person name="Kyrpides N."/>
            <person name="Mikhailova N."/>
            <person name="Ye Q."/>
            <person name="Zhou J."/>
            <person name="Richardson P."/>
            <person name="Fields M.W."/>
        </authorList>
    </citation>
    <scope>NUCLEOTIDE SEQUENCE [LARGE SCALE GENOMIC DNA]</scope>
    <source>
        <strain>QYMF</strain>
    </source>
</reference>
<evidence type="ECO:0000255" key="1">
    <source>
        <dbReference type="HAMAP-Rule" id="MF_01018"/>
    </source>
</evidence>
<protein>
    <recommendedName>
        <fullName evidence="1">ATP phosphoribosyltransferase</fullName>
        <shortName evidence="1">ATP-PRT</shortName>
        <shortName evidence="1">ATP-PRTase</shortName>
        <ecNumber evidence="1">2.4.2.17</ecNumber>
    </recommendedName>
</protein>
<keyword id="KW-0028">Amino-acid biosynthesis</keyword>
<keyword id="KW-0067">ATP-binding</keyword>
<keyword id="KW-0963">Cytoplasm</keyword>
<keyword id="KW-0328">Glycosyltransferase</keyword>
<keyword id="KW-0368">Histidine biosynthesis</keyword>
<keyword id="KW-0547">Nucleotide-binding</keyword>
<keyword id="KW-1185">Reference proteome</keyword>
<keyword id="KW-0808">Transferase</keyword>
<dbReference type="EC" id="2.4.2.17" evidence="1"/>
<dbReference type="EMBL" id="CP000724">
    <property type="protein sequence ID" value="ABR46798.1"/>
    <property type="molecule type" value="Genomic_DNA"/>
</dbReference>
<dbReference type="RefSeq" id="WP_011971706.1">
    <property type="nucleotide sequence ID" value="NC_009633.1"/>
</dbReference>
<dbReference type="SMR" id="A6TKT0"/>
<dbReference type="STRING" id="293826.Amet_0571"/>
<dbReference type="KEGG" id="amt:Amet_0571"/>
<dbReference type="eggNOG" id="COG0040">
    <property type="taxonomic scope" value="Bacteria"/>
</dbReference>
<dbReference type="HOGENOM" id="CLU_038115_2_0_9"/>
<dbReference type="OrthoDB" id="9801867at2"/>
<dbReference type="UniPathway" id="UPA00031">
    <property type="reaction ID" value="UER00006"/>
</dbReference>
<dbReference type="Proteomes" id="UP000001572">
    <property type="component" value="Chromosome"/>
</dbReference>
<dbReference type="GO" id="GO:0005737">
    <property type="term" value="C:cytoplasm"/>
    <property type="evidence" value="ECO:0007669"/>
    <property type="project" value="UniProtKB-SubCell"/>
</dbReference>
<dbReference type="GO" id="GO:0005524">
    <property type="term" value="F:ATP binding"/>
    <property type="evidence" value="ECO:0007669"/>
    <property type="project" value="UniProtKB-KW"/>
</dbReference>
<dbReference type="GO" id="GO:0003879">
    <property type="term" value="F:ATP phosphoribosyltransferase activity"/>
    <property type="evidence" value="ECO:0007669"/>
    <property type="project" value="UniProtKB-UniRule"/>
</dbReference>
<dbReference type="GO" id="GO:0000105">
    <property type="term" value="P:L-histidine biosynthetic process"/>
    <property type="evidence" value="ECO:0007669"/>
    <property type="project" value="UniProtKB-UniRule"/>
</dbReference>
<dbReference type="CDD" id="cd13595">
    <property type="entry name" value="PBP2_HisGs"/>
    <property type="match status" value="1"/>
</dbReference>
<dbReference type="FunFam" id="3.40.190.10:FF:000011">
    <property type="entry name" value="ATP phosphoribosyltransferase"/>
    <property type="match status" value="1"/>
</dbReference>
<dbReference type="Gene3D" id="3.40.190.10">
    <property type="entry name" value="Periplasmic binding protein-like II"/>
    <property type="match status" value="2"/>
</dbReference>
<dbReference type="HAMAP" id="MF_01018">
    <property type="entry name" value="HisG_Short"/>
    <property type="match status" value="1"/>
</dbReference>
<dbReference type="InterPro" id="IPR013820">
    <property type="entry name" value="ATP_PRibTrfase_cat"/>
</dbReference>
<dbReference type="InterPro" id="IPR018198">
    <property type="entry name" value="ATP_PRibTrfase_CS"/>
</dbReference>
<dbReference type="InterPro" id="IPR001348">
    <property type="entry name" value="ATP_PRibTrfase_HisG"/>
</dbReference>
<dbReference type="InterPro" id="IPR024893">
    <property type="entry name" value="ATP_PRibTrfase_HisG_short"/>
</dbReference>
<dbReference type="NCBIfam" id="TIGR00070">
    <property type="entry name" value="hisG"/>
    <property type="match status" value="1"/>
</dbReference>
<dbReference type="PANTHER" id="PTHR21403:SF8">
    <property type="entry name" value="ATP PHOSPHORIBOSYLTRANSFERASE"/>
    <property type="match status" value="1"/>
</dbReference>
<dbReference type="PANTHER" id="PTHR21403">
    <property type="entry name" value="ATP PHOSPHORIBOSYLTRANSFERASE ATP-PRTASE"/>
    <property type="match status" value="1"/>
</dbReference>
<dbReference type="Pfam" id="PF01634">
    <property type="entry name" value="HisG"/>
    <property type="match status" value="1"/>
</dbReference>
<dbReference type="SUPFAM" id="SSF53850">
    <property type="entry name" value="Periplasmic binding protein-like II"/>
    <property type="match status" value="1"/>
</dbReference>
<dbReference type="PROSITE" id="PS01316">
    <property type="entry name" value="ATP_P_PHORIBOSYLTR"/>
    <property type="match status" value="1"/>
</dbReference>
<accession>A6TKT0</accession>
<organism>
    <name type="scientific">Alkaliphilus metalliredigens (strain QYMF)</name>
    <dbReference type="NCBI Taxonomy" id="293826"/>
    <lineage>
        <taxon>Bacteria</taxon>
        <taxon>Bacillati</taxon>
        <taxon>Bacillota</taxon>
        <taxon>Clostridia</taxon>
        <taxon>Peptostreptococcales</taxon>
        <taxon>Natronincolaceae</taxon>
        <taxon>Alkaliphilus</taxon>
    </lineage>
</organism>
<feature type="chain" id="PRO_0000319511" description="ATP phosphoribosyltransferase">
    <location>
        <begin position="1"/>
        <end position="209"/>
    </location>
</feature>
<proteinExistence type="inferred from homology"/>